<proteinExistence type="evidence at protein level"/>
<organism>
    <name type="scientific">Homo sapiens</name>
    <name type="common">Human</name>
    <dbReference type="NCBI Taxonomy" id="9606"/>
    <lineage>
        <taxon>Eukaryota</taxon>
        <taxon>Metazoa</taxon>
        <taxon>Chordata</taxon>
        <taxon>Craniata</taxon>
        <taxon>Vertebrata</taxon>
        <taxon>Euteleostomi</taxon>
        <taxon>Mammalia</taxon>
        <taxon>Eutheria</taxon>
        <taxon>Euarchontoglires</taxon>
        <taxon>Primates</taxon>
        <taxon>Haplorrhini</taxon>
        <taxon>Catarrhini</taxon>
        <taxon>Hominidae</taxon>
        <taxon>Homo</taxon>
    </lineage>
</organism>
<sequence>MGLPEERVRSGSGSRGQEEAGAGGRARSWSPPPEVSRSAHVPSLQRYRELHRRSVEEPREFWGDIAKEFYWKTPCPGPFLRYNFDVTKGKIFIEWMKGATTNICYNVLDRNVHEKKLGDKVAFYWEGNEPGETTQITYHQLLVQVCQFSNVLRKQGIQKGDRVAIYMPMIPELVVAMLACARIGALHSIVFAGFSSESLCERILDSSCSLLITTDAFYRGEKLVNLKELADEALQKCQEKGFPVRCCIVVKHLGRAELGMGDSTSQSPPIKRSCPDVQISWNQGIDLWWHELMQEAGDECEPEWCDAEDPLFILYTSGSTGKPKGVVHTVGGYMLYVATTFKYVFDFHAEDVFWCTADIGWITGHSYVTYGPLANGATSVLFEGIPTYPDVNRLWSIVDKYKVTKFYTAPTAIRLLMKFGDEPVTKHSRASLQVLGTVGEPINPEAWLWYHRVVGAQRCPIVDTFWQTETGGHMLTPLPGATPMKPGSATFPFFGVAPAILNESGEELEGEAEGYLVFKQPWPGIMRTVYGNHERFETTYFKKFPGYYVTGDGCQRDQDGYYWITGRIDDMLNVSGHLLSTAEVESALVEHEAVAEAAVVGHPHPVKGECLYCFVTLCDGHTFSPKLTEELKKQIREKIGPIATPDYIQNAPGLPKTRSGKIMRRVLRKIAQNDHDLGDMSTVADPSVISHLFSHRCLTIQ</sequence>
<keyword id="KW-0007">Acetylation</keyword>
<keyword id="KW-0010">Activator</keyword>
<keyword id="KW-0025">Alternative splicing</keyword>
<keyword id="KW-0067">ATP-binding</keyword>
<keyword id="KW-0963">Cytoplasm</keyword>
<keyword id="KW-0436">Ligase</keyword>
<keyword id="KW-0443">Lipid metabolism</keyword>
<keyword id="KW-0547">Nucleotide-binding</keyword>
<keyword id="KW-0539">Nucleus</keyword>
<keyword id="KW-0597">Phosphoprotein</keyword>
<keyword id="KW-1267">Proteomics identification</keyword>
<keyword id="KW-1185">Reference proteome</keyword>
<keyword id="KW-0804">Transcription</keyword>
<keyword id="KW-0805">Transcription regulation</keyword>
<reference key="1">
    <citation type="journal article" date="2000" name="J. Biol. Chem.">
        <title>Molecular characterization of human acetyl-CoA synthetase, an enzyme regulated by sterol regulatory element-binding proteins.</title>
        <authorList>
            <person name="Luong A."/>
            <person name="Hannah V.C."/>
            <person name="Brown M.S."/>
            <person name="Goldstein J.L."/>
        </authorList>
    </citation>
    <scope>NUCLEOTIDE SEQUENCE [MRNA] (ISOFORM 1)</scope>
    <scope>FUNCTION</scope>
    <scope>CATALYTIC ACTIVITY</scope>
    <scope>SUBCELLULAR LOCATION</scope>
    <scope>SUBUNIT</scope>
</reference>
<reference key="2">
    <citation type="journal article" date="2004" name="Nat. Genet.">
        <title>Complete sequencing and characterization of 21,243 full-length human cDNAs.</title>
        <authorList>
            <person name="Ota T."/>
            <person name="Suzuki Y."/>
            <person name="Nishikawa T."/>
            <person name="Otsuki T."/>
            <person name="Sugiyama T."/>
            <person name="Irie R."/>
            <person name="Wakamatsu A."/>
            <person name="Hayashi K."/>
            <person name="Sato H."/>
            <person name="Nagai K."/>
            <person name="Kimura K."/>
            <person name="Makita H."/>
            <person name="Sekine M."/>
            <person name="Obayashi M."/>
            <person name="Nishi T."/>
            <person name="Shibahara T."/>
            <person name="Tanaka T."/>
            <person name="Ishii S."/>
            <person name="Yamamoto J."/>
            <person name="Saito K."/>
            <person name="Kawai Y."/>
            <person name="Isono Y."/>
            <person name="Nakamura Y."/>
            <person name="Nagahari K."/>
            <person name="Murakami K."/>
            <person name="Yasuda T."/>
            <person name="Iwayanagi T."/>
            <person name="Wagatsuma M."/>
            <person name="Shiratori A."/>
            <person name="Sudo H."/>
            <person name="Hosoiri T."/>
            <person name="Kaku Y."/>
            <person name="Kodaira H."/>
            <person name="Kondo H."/>
            <person name="Sugawara M."/>
            <person name="Takahashi M."/>
            <person name="Kanda K."/>
            <person name="Yokoi T."/>
            <person name="Furuya T."/>
            <person name="Kikkawa E."/>
            <person name="Omura Y."/>
            <person name="Abe K."/>
            <person name="Kamihara K."/>
            <person name="Katsuta N."/>
            <person name="Sato K."/>
            <person name="Tanikawa M."/>
            <person name="Yamazaki M."/>
            <person name="Ninomiya K."/>
            <person name="Ishibashi T."/>
            <person name="Yamashita H."/>
            <person name="Murakawa K."/>
            <person name="Fujimori K."/>
            <person name="Tanai H."/>
            <person name="Kimata M."/>
            <person name="Watanabe M."/>
            <person name="Hiraoka S."/>
            <person name="Chiba Y."/>
            <person name="Ishida S."/>
            <person name="Ono Y."/>
            <person name="Takiguchi S."/>
            <person name="Watanabe S."/>
            <person name="Yosida M."/>
            <person name="Hotuta T."/>
            <person name="Kusano J."/>
            <person name="Kanehori K."/>
            <person name="Takahashi-Fujii A."/>
            <person name="Hara H."/>
            <person name="Tanase T.-O."/>
            <person name="Nomura Y."/>
            <person name="Togiya S."/>
            <person name="Komai F."/>
            <person name="Hara R."/>
            <person name="Takeuchi K."/>
            <person name="Arita M."/>
            <person name="Imose N."/>
            <person name="Musashino K."/>
            <person name="Yuuki H."/>
            <person name="Oshima A."/>
            <person name="Sasaki N."/>
            <person name="Aotsuka S."/>
            <person name="Yoshikawa Y."/>
            <person name="Matsunawa H."/>
            <person name="Ichihara T."/>
            <person name="Shiohata N."/>
            <person name="Sano S."/>
            <person name="Moriya S."/>
            <person name="Momiyama H."/>
            <person name="Satoh N."/>
            <person name="Takami S."/>
            <person name="Terashima Y."/>
            <person name="Suzuki O."/>
            <person name="Nakagawa S."/>
            <person name="Senoh A."/>
            <person name="Mizoguchi H."/>
            <person name="Goto Y."/>
            <person name="Shimizu F."/>
            <person name="Wakebe H."/>
            <person name="Hishigaki H."/>
            <person name="Watanabe T."/>
            <person name="Sugiyama A."/>
            <person name="Takemoto M."/>
            <person name="Kawakami B."/>
            <person name="Yamazaki M."/>
            <person name="Watanabe K."/>
            <person name="Kumagai A."/>
            <person name="Itakura S."/>
            <person name="Fukuzumi Y."/>
            <person name="Fujimori Y."/>
            <person name="Komiyama M."/>
            <person name="Tashiro H."/>
            <person name="Tanigami A."/>
            <person name="Fujiwara T."/>
            <person name="Ono T."/>
            <person name="Yamada K."/>
            <person name="Fujii Y."/>
            <person name="Ozaki K."/>
            <person name="Hirao M."/>
            <person name="Ohmori Y."/>
            <person name="Kawabata A."/>
            <person name="Hikiji T."/>
            <person name="Kobatake N."/>
            <person name="Inagaki H."/>
            <person name="Ikema Y."/>
            <person name="Okamoto S."/>
            <person name="Okitani R."/>
            <person name="Kawakami T."/>
            <person name="Noguchi S."/>
            <person name="Itoh T."/>
            <person name="Shigeta K."/>
            <person name="Senba T."/>
            <person name="Matsumura K."/>
            <person name="Nakajima Y."/>
            <person name="Mizuno T."/>
            <person name="Morinaga M."/>
            <person name="Sasaki M."/>
            <person name="Togashi T."/>
            <person name="Oyama M."/>
            <person name="Hata H."/>
            <person name="Watanabe M."/>
            <person name="Komatsu T."/>
            <person name="Mizushima-Sugano J."/>
            <person name="Satoh T."/>
            <person name="Shirai Y."/>
            <person name="Takahashi Y."/>
            <person name="Nakagawa K."/>
            <person name="Okumura K."/>
            <person name="Nagase T."/>
            <person name="Nomura N."/>
            <person name="Kikuchi H."/>
            <person name="Masuho Y."/>
            <person name="Yamashita R."/>
            <person name="Nakai K."/>
            <person name="Yada T."/>
            <person name="Nakamura Y."/>
            <person name="Ohara O."/>
            <person name="Isogai T."/>
            <person name="Sugano S."/>
        </authorList>
    </citation>
    <scope>NUCLEOTIDE SEQUENCE [LARGE SCALE MRNA] (ISOFORM 2)</scope>
    <source>
        <tissue>Tongue</tissue>
    </source>
</reference>
<reference key="3">
    <citation type="journal article" date="2001" name="Nature">
        <title>The DNA sequence and comparative analysis of human chromosome 20.</title>
        <authorList>
            <person name="Deloukas P."/>
            <person name="Matthews L.H."/>
            <person name="Ashurst J.L."/>
            <person name="Burton J."/>
            <person name="Gilbert J.G.R."/>
            <person name="Jones M."/>
            <person name="Stavrides G."/>
            <person name="Almeida J.P."/>
            <person name="Babbage A.K."/>
            <person name="Bagguley C.L."/>
            <person name="Bailey J."/>
            <person name="Barlow K.F."/>
            <person name="Bates K.N."/>
            <person name="Beard L.M."/>
            <person name="Beare D.M."/>
            <person name="Beasley O.P."/>
            <person name="Bird C.P."/>
            <person name="Blakey S.E."/>
            <person name="Bridgeman A.M."/>
            <person name="Brown A.J."/>
            <person name="Buck D."/>
            <person name="Burrill W.D."/>
            <person name="Butler A.P."/>
            <person name="Carder C."/>
            <person name="Carter N.P."/>
            <person name="Chapman J.C."/>
            <person name="Clamp M."/>
            <person name="Clark G."/>
            <person name="Clark L.N."/>
            <person name="Clark S.Y."/>
            <person name="Clee C.M."/>
            <person name="Clegg S."/>
            <person name="Cobley V.E."/>
            <person name="Collier R.E."/>
            <person name="Connor R.E."/>
            <person name="Corby N.R."/>
            <person name="Coulson A."/>
            <person name="Coville G.J."/>
            <person name="Deadman R."/>
            <person name="Dhami P.D."/>
            <person name="Dunn M."/>
            <person name="Ellington A.G."/>
            <person name="Frankland J.A."/>
            <person name="Fraser A."/>
            <person name="French L."/>
            <person name="Garner P."/>
            <person name="Grafham D.V."/>
            <person name="Griffiths C."/>
            <person name="Griffiths M.N.D."/>
            <person name="Gwilliam R."/>
            <person name="Hall R.E."/>
            <person name="Hammond S."/>
            <person name="Harley J.L."/>
            <person name="Heath P.D."/>
            <person name="Ho S."/>
            <person name="Holden J.L."/>
            <person name="Howden P.J."/>
            <person name="Huckle E."/>
            <person name="Hunt A.R."/>
            <person name="Hunt S.E."/>
            <person name="Jekosch K."/>
            <person name="Johnson C.M."/>
            <person name="Johnson D."/>
            <person name="Kay M.P."/>
            <person name="Kimberley A.M."/>
            <person name="King A."/>
            <person name="Knights A."/>
            <person name="Laird G.K."/>
            <person name="Lawlor S."/>
            <person name="Lehvaeslaiho M.H."/>
            <person name="Leversha M.A."/>
            <person name="Lloyd C."/>
            <person name="Lloyd D.M."/>
            <person name="Lovell J.D."/>
            <person name="Marsh V.L."/>
            <person name="Martin S.L."/>
            <person name="McConnachie L.J."/>
            <person name="McLay K."/>
            <person name="McMurray A.A."/>
            <person name="Milne S.A."/>
            <person name="Mistry D."/>
            <person name="Moore M.J.F."/>
            <person name="Mullikin J.C."/>
            <person name="Nickerson T."/>
            <person name="Oliver K."/>
            <person name="Parker A."/>
            <person name="Patel R."/>
            <person name="Pearce T.A.V."/>
            <person name="Peck A.I."/>
            <person name="Phillimore B.J.C.T."/>
            <person name="Prathalingam S.R."/>
            <person name="Plumb R.W."/>
            <person name="Ramsay H."/>
            <person name="Rice C.M."/>
            <person name="Ross M.T."/>
            <person name="Scott C.E."/>
            <person name="Sehra H.K."/>
            <person name="Shownkeen R."/>
            <person name="Sims S."/>
            <person name="Skuce C.D."/>
            <person name="Smith M.L."/>
            <person name="Soderlund C."/>
            <person name="Steward C.A."/>
            <person name="Sulston J.E."/>
            <person name="Swann R.M."/>
            <person name="Sycamore N."/>
            <person name="Taylor R."/>
            <person name="Tee L."/>
            <person name="Thomas D.W."/>
            <person name="Thorpe A."/>
            <person name="Tracey A."/>
            <person name="Tromans A.C."/>
            <person name="Vaudin M."/>
            <person name="Wall M."/>
            <person name="Wallis J.M."/>
            <person name="Whitehead S.L."/>
            <person name="Whittaker P."/>
            <person name="Willey D.L."/>
            <person name="Williams L."/>
            <person name="Williams S.A."/>
            <person name="Wilming L."/>
            <person name="Wray P.W."/>
            <person name="Hubbard T."/>
            <person name="Durbin R.M."/>
            <person name="Bentley D.R."/>
            <person name="Beck S."/>
            <person name="Rogers J."/>
        </authorList>
    </citation>
    <scope>NUCLEOTIDE SEQUENCE [LARGE SCALE GENOMIC DNA]</scope>
</reference>
<reference key="4">
    <citation type="submission" date="2005-09" db="EMBL/GenBank/DDBJ databases">
        <authorList>
            <person name="Mural R.J."/>
            <person name="Istrail S."/>
            <person name="Sutton G."/>
            <person name="Florea L."/>
            <person name="Halpern A.L."/>
            <person name="Mobarry C.M."/>
            <person name="Lippert R."/>
            <person name="Walenz B."/>
            <person name="Shatkay H."/>
            <person name="Dew I."/>
            <person name="Miller J.R."/>
            <person name="Flanigan M.J."/>
            <person name="Edwards N.J."/>
            <person name="Bolanos R."/>
            <person name="Fasulo D."/>
            <person name="Halldorsson B.V."/>
            <person name="Hannenhalli S."/>
            <person name="Turner R."/>
            <person name="Yooseph S."/>
            <person name="Lu F."/>
            <person name="Nusskern D.R."/>
            <person name="Shue B.C."/>
            <person name="Zheng X.H."/>
            <person name="Zhong F."/>
            <person name="Delcher A.L."/>
            <person name="Huson D.H."/>
            <person name="Kravitz S.A."/>
            <person name="Mouchard L."/>
            <person name="Reinert K."/>
            <person name="Remington K.A."/>
            <person name="Clark A.G."/>
            <person name="Waterman M.S."/>
            <person name="Eichler E.E."/>
            <person name="Adams M.D."/>
            <person name="Hunkapiller M.W."/>
            <person name="Myers E.W."/>
            <person name="Venter J.C."/>
        </authorList>
    </citation>
    <scope>NUCLEOTIDE SEQUENCE [LARGE SCALE GENOMIC DNA]</scope>
</reference>
<reference key="5">
    <citation type="journal article" date="2004" name="Genome Res.">
        <title>The status, quality, and expansion of the NIH full-length cDNA project: the Mammalian Gene Collection (MGC).</title>
        <authorList>
            <consortium name="The MGC Project Team"/>
        </authorList>
    </citation>
    <scope>NUCLEOTIDE SEQUENCE [LARGE SCALE MRNA] (ISOFORM 1)</scope>
    <source>
        <tissue>Skin</tissue>
    </source>
</reference>
<reference key="6">
    <citation type="journal article" date="2008" name="J. Proteome Res.">
        <title>Phosphoproteome of resting human platelets.</title>
        <authorList>
            <person name="Zahedi R.P."/>
            <person name="Lewandrowski U."/>
            <person name="Wiesner J."/>
            <person name="Wortelkamp S."/>
            <person name="Moebius J."/>
            <person name="Schuetz C."/>
            <person name="Walter U."/>
            <person name="Gambaryan S."/>
            <person name="Sickmann A."/>
        </authorList>
    </citation>
    <scope>IDENTIFICATION BY MASS SPECTROMETRY [LARGE SCALE ANALYSIS]</scope>
    <source>
        <tissue>Platelet</tissue>
    </source>
</reference>
<reference key="7">
    <citation type="journal article" date="2008" name="Proc. Natl. Acad. Sci. U.S.A.">
        <title>A quantitative atlas of mitotic phosphorylation.</title>
        <authorList>
            <person name="Dephoure N."/>
            <person name="Zhou C."/>
            <person name="Villen J."/>
            <person name="Beausoleil S.A."/>
            <person name="Bakalarski C.E."/>
            <person name="Elledge S.J."/>
            <person name="Gygi S.P."/>
        </authorList>
    </citation>
    <scope>PHOSPHORYLATION [LARGE SCALE ANALYSIS] AT SER-30 AND SER-267</scope>
    <scope>IDENTIFICATION BY MASS SPECTROMETRY [LARGE SCALE ANALYSIS]</scope>
    <source>
        <tissue>Cervix carcinoma</tissue>
    </source>
</reference>
<reference key="8">
    <citation type="journal article" date="2009" name="Anal. Chem.">
        <title>Lys-N and trypsin cover complementary parts of the phosphoproteome in a refined SCX-based approach.</title>
        <authorList>
            <person name="Gauci S."/>
            <person name="Helbig A.O."/>
            <person name="Slijper M."/>
            <person name="Krijgsveld J."/>
            <person name="Heck A.J."/>
            <person name="Mohammed S."/>
        </authorList>
    </citation>
    <scope>IDENTIFICATION BY MASS SPECTROMETRY [LARGE SCALE ANALYSIS]</scope>
</reference>
<reference key="9">
    <citation type="journal article" date="2009" name="Science">
        <title>Lysine acetylation targets protein complexes and co-regulates major cellular functions.</title>
        <authorList>
            <person name="Choudhary C."/>
            <person name="Kumar C."/>
            <person name="Gnad F."/>
            <person name="Nielsen M.L."/>
            <person name="Rehman M."/>
            <person name="Walther T.C."/>
            <person name="Olsen J.V."/>
            <person name="Mann M."/>
        </authorList>
    </citation>
    <scope>ACETYLATION [LARGE SCALE ANALYSIS] AT LYS-418</scope>
    <scope>IDENTIFICATION BY MASS SPECTROMETRY [LARGE SCALE ANALYSIS]</scope>
</reference>
<reference key="10">
    <citation type="journal article" date="2010" name="Sci. Signal.">
        <title>Quantitative phosphoproteomics reveals widespread full phosphorylation site occupancy during mitosis.</title>
        <authorList>
            <person name="Olsen J.V."/>
            <person name="Vermeulen M."/>
            <person name="Santamaria A."/>
            <person name="Kumar C."/>
            <person name="Miller M.L."/>
            <person name="Jensen L.J."/>
            <person name="Gnad F."/>
            <person name="Cox J."/>
            <person name="Jensen T.S."/>
            <person name="Nigg E.A."/>
            <person name="Brunak S."/>
            <person name="Mann M."/>
        </authorList>
    </citation>
    <scope>PHOSPHORYLATION [LARGE SCALE ANALYSIS] AT SER-267</scope>
    <scope>IDENTIFICATION BY MASS SPECTROMETRY [LARGE SCALE ANALYSIS]</scope>
    <source>
        <tissue>Cervix carcinoma</tissue>
    </source>
</reference>
<reference key="11">
    <citation type="journal article" date="2011" name="BMC Syst. Biol.">
        <title>Initial characterization of the human central proteome.</title>
        <authorList>
            <person name="Burkard T.R."/>
            <person name="Planyavsky M."/>
            <person name="Kaupe I."/>
            <person name="Breitwieser F.P."/>
            <person name="Buerckstuemmer T."/>
            <person name="Bennett K.L."/>
            <person name="Superti-Furga G."/>
            <person name="Colinge J."/>
        </authorList>
    </citation>
    <scope>IDENTIFICATION BY MASS SPECTROMETRY [LARGE SCALE ANALYSIS]</scope>
</reference>
<reference key="12">
    <citation type="journal article" date="2013" name="J. Proteome Res.">
        <title>Toward a comprehensive characterization of a human cancer cell phosphoproteome.</title>
        <authorList>
            <person name="Zhou H."/>
            <person name="Di Palma S."/>
            <person name="Preisinger C."/>
            <person name="Peng M."/>
            <person name="Polat A.N."/>
            <person name="Heck A.J."/>
            <person name="Mohammed S."/>
        </authorList>
    </citation>
    <scope>PHOSPHORYLATION [LARGE SCALE ANALYSIS] AT SER-28; SER-30 AND SER-267</scope>
    <scope>IDENTIFICATION BY MASS SPECTROMETRY [LARGE SCALE ANALYSIS]</scope>
    <source>
        <tissue>Cervix carcinoma</tissue>
        <tissue>Erythroleukemia</tissue>
    </source>
</reference>
<reference key="13">
    <citation type="journal article" date="2014" name="J. Proteomics">
        <title>An enzyme assisted RP-RPLC approach for in-depth analysis of human liver phosphoproteome.</title>
        <authorList>
            <person name="Bian Y."/>
            <person name="Song C."/>
            <person name="Cheng K."/>
            <person name="Dong M."/>
            <person name="Wang F."/>
            <person name="Huang J."/>
            <person name="Sun D."/>
            <person name="Wang L."/>
            <person name="Ye M."/>
            <person name="Zou H."/>
        </authorList>
    </citation>
    <scope>PHOSPHORYLATION [LARGE SCALE ANALYSIS] AT SER-28; SER-30; SER-36 AND SER-267</scope>
    <scope>IDENTIFICATION BY MASS SPECTROMETRY [LARGE SCALE ANALYSIS]</scope>
    <source>
        <tissue>Liver</tissue>
    </source>
</reference>
<reference key="14">
    <citation type="journal article" date="2017" name="J. Biochem.">
        <title>Molecular cloning of rat acss3 and characterization of mammalian propionyl-CoA synthetase in the liver mitochondrial matrix.</title>
        <authorList>
            <person name="Yoshimura Y."/>
            <person name="Araki A."/>
            <person name="Maruta H."/>
            <person name="Takahashi Y."/>
            <person name="Yamashita H."/>
        </authorList>
    </citation>
    <scope>FUNCTION</scope>
    <scope>CATALYTIC ACTIVITY</scope>
    <scope>SUBCELLULAR LOCATION</scope>
</reference>
<reference key="15">
    <citation type="journal article" date="2017" name="Mol. Cell">
        <title>Nucleus-Translocated ACSS2 Promotes Gene Transcription for Lysosomal Biogenesis and Autophagy.</title>
        <authorList>
            <person name="Li X."/>
            <person name="Yu W."/>
            <person name="Qian X."/>
            <person name="Xia Y."/>
            <person name="Zheng Y."/>
            <person name="Lee J.H."/>
            <person name="Li W."/>
            <person name="Lyu J."/>
            <person name="Rao G."/>
            <person name="Zhang X."/>
            <person name="Qian C.N."/>
            <person name="Rozen S.G."/>
            <person name="Jiang T."/>
            <person name="Lu Z."/>
        </authorList>
    </citation>
    <scope>FUNCTION</scope>
    <scope>CATALYTIC ACTIVITY</scope>
    <scope>PHOSPHORYLATION AT SER-659</scope>
    <scope>MUTAGENESIS OF THR-363; SER-659 AND 664-ARG--ARG-665</scope>
    <scope>SUBCELLULAR LOCATION</scope>
    <scope>NUCLEOLAR LOCALIZATION SIGNAL</scope>
    <scope>INTERACTION WITH PRKAA2; TFEB AND KPAN1</scope>
</reference>
<feature type="chain" id="PRO_0000208423" description="Acetyl-coenzyme A synthetase, cytoplasmic">
    <location>
        <begin position="1"/>
        <end position="701"/>
    </location>
</feature>
<feature type="region of interest" description="Interaction with TFEB" evidence="6">
    <location>
        <begin position="1"/>
        <end position="107"/>
    </location>
</feature>
<feature type="region of interest" description="Disordered" evidence="3">
    <location>
        <begin position="1"/>
        <end position="41"/>
    </location>
</feature>
<feature type="short sequence motif" description="Nuclear localization signal" evidence="6">
    <location>
        <begin position="656"/>
        <end position="668"/>
    </location>
</feature>
<feature type="binding site" evidence="1">
    <location>
        <begin position="219"/>
        <end position="222"/>
    </location>
    <ligand>
        <name>CoA</name>
        <dbReference type="ChEBI" id="CHEBI:57287"/>
    </ligand>
</feature>
<feature type="binding site" evidence="1">
    <location>
        <position position="363"/>
    </location>
    <ligand>
        <name>CoA</name>
        <dbReference type="ChEBI" id="CHEBI:57287"/>
    </ligand>
</feature>
<feature type="binding site" evidence="1">
    <location>
        <begin position="439"/>
        <end position="441"/>
    </location>
    <ligand>
        <name>ATP</name>
        <dbReference type="ChEBI" id="CHEBI:30616"/>
    </ligand>
</feature>
<feature type="binding site" evidence="1">
    <location>
        <begin position="463"/>
        <end position="468"/>
    </location>
    <ligand>
        <name>ATP</name>
        <dbReference type="ChEBI" id="CHEBI:30616"/>
    </ligand>
</feature>
<feature type="binding site" evidence="1">
    <location>
        <position position="552"/>
    </location>
    <ligand>
        <name>ATP</name>
        <dbReference type="ChEBI" id="CHEBI:30616"/>
    </ligand>
</feature>
<feature type="binding site" evidence="1">
    <location>
        <position position="567"/>
    </location>
    <ligand>
        <name>ATP</name>
        <dbReference type="ChEBI" id="CHEBI:30616"/>
    </ligand>
</feature>
<feature type="binding site" evidence="1">
    <location>
        <position position="575"/>
    </location>
    <ligand>
        <name>CoA</name>
        <dbReference type="ChEBI" id="CHEBI:57287"/>
    </ligand>
</feature>
<feature type="binding site" evidence="1">
    <location>
        <position position="636"/>
    </location>
    <ligand>
        <name>CoA</name>
        <dbReference type="ChEBI" id="CHEBI:57287"/>
    </ligand>
</feature>
<feature type="modified residue" description="Phosphoserine" evidence="14 15">
    <location>
        <position position="28"/>
    </location>
</feature>
<feature type="modified residue" description="Phosphoserine" evidence="11 14 15">
    <location>
        <position position="30"/>
    </location>
</feature>
<feature type="modified residue" description="Phosphoserine" evidence="15">
    <location>
        <position position="36"/>
    </location>
</feature>
<feature type="modified residue" description="Phosphoserine" evidence="2">
    <location>
        <position position="263"/>
    </location>
</feature>
<feature type="modified residue" description="Phosphoserine" evidence="2">
    <location>
        <position position="265"/>
    </location>
</feature>
<feature type="modified residue" description="Phosphoserine" evidence="11 13 14 15">
    <location>
        <position position="267"/>
    </location>
</feature>
<feature type="modified residue" description="N6-acetyllysine" evidence="12">
    <location>
        <position position="418"/>
    </location>
</feature>
<feature type="modified residue" description="Phosphoserine; by AMPK" evidence="6">
    <location>
        <position position="659"/>
    </location>
</feature>
<feature type="modified residue" description="N6-acetyllysine" evidence="2">
    <location>
        <position position="661"/>
    </location>
</feature>
<feature type="splice variant" id="VSP_046376" description="In isoform 2." evidence="7">
    <original>V</original>
    <variation>VQGKLKEKSKRVQP</variation>
    <location>
        <position position="277"/>
    </location>
</feature>
<feature type="mutagenesis site" description="Loss of catalytic activity but no effect on its nuclear translocation upon glucose deprivation. Loss of ability to promote gene transcription for lysosomal biogenesis and autophagy." evidence="6">
    <original>T</original>
    <variation>A</variation>
    <location>
        <position position="363"/>
    </location>
</feature>
<feature type="mutagenesis site" description="No effect on catalytic activity. Loss of AMPK-mediated phosphorylation, interaction with KPNA1 and nuclear translocation upon glucose deprivation. Loss of ability to promote gene transcription for lysosomal biogenesis and autophagy." evidence="6">
    <original>S</original>
    <variation>A</variation>
    <location>
        <position position="659"/>
    </location>
</feature>
<feature type="mutagenesis site" description="No effect on catalytic activity. Loss of interaction with KPNA1 and nuclear translocation upon glucose deprivation. Loss of ability to promote gene transcription for lysosomal biogenesis and autophagy." evidence="6">
    <original>RR</original>
    <variation>AA</variation>
    <location>
        <begin position="664"/>
        <end position="665"/>
    </location>
</feature>
<feature type="sequence conflict" description="In Ref. 2; BAC03849." evidence="8" ref="2">
    <original>F</original>
    <variation>L</variation>
    <location>
        <position position="79"/>
    </location>
</feature>
<feature type="sequence conflict" description="In Ref. 5; AAH12172." evidence="8" ref="5">
    <original>V</original>
    <variation>F</variation>
    <location>
        <position position="615"/>
    </location>
</feature>
<feature type="sequence conflict" description="In Ref. 2; BAC03849." evidence="8" ref="2">
    <original>M</original>
    <variation>L</variation>
    <location>
        <position position="680"/>
    </location>
</feature>
<gene>
    <name type="primary">ACSS2</name>
    <name type="synonym">ACAS2</name>
</gene>
<comment type="function">
    <text evidence="2 4 5 6">Catalyzes the synthesis of acetyl-CoA from short-chain fatty acids (PubMed:10843999, PubMed:28003429, PubMed:28552616). Acetate is the preferred substrate (PubMed:10843999, PubMed:28003429). Can also utilize propionate with a much lower affinity (By similarity). Nuclear ACSS2 promotes glucose deprivation-induced lysosomal biogenesis and autophagy, tumor cell survival and brain tumorigenesis (PubMed:28552616). Glucose deprivation results in AMPK-mediated phosphorylation of ACSS2 leading to its translocation to the nucleus where it binds to TFEB and locally produces acetyl-CoA for histone acetylation in the promoter regions of TFEB target genes thereby activating their transcription (PubMed:28552616). The regulation of genes associated with autophagy and lysosomal activity through ACSS2 is important for brain tumorigenesis and tumor survival (PubMed:28552616). Acts as a chromatin-bound transcriptional coactivator that up-regulates histone acetylation and expression of neuronal genes (By similarity). Can be recruited to the loci of memory-related neuronal genes to maintain a local acetyl-CoA pool, providing the substrate for histone acetylation and promoting the expression of specific genes, which is essential for maintaining long-term spatial memory (By similarity).</text>
</comment>
<comment type="catalytic activity">
    <reaction evidence="4 5 6">
        <text>acetate + ATP + CoA = acetyl-CoA + AMP + diphosphate</text>
        <dbReference type="Rhea" id="RHEA:23176"/>
        <dbReference type="ChEBI" id="CHEBI:30089"/>
        <dbReference type="ChEBI" id="CHEBI:30616"/>
        <dbReference type="ChEBI" id="CHEBI:33019"/>
        <dbReference type="ChEBI" id="CHEBI:57287"/>
        <dbReference type="ChEBI" id="CHEBI:57288"/>
        <dbReference type="ChEBI" id="CHEBI:456215"/>
        <dbReference type="EC" id="6.2.1.1"/>
    </reaction>
    <physiologicalReaction direction="left-to-right" evidence="9 10">
        <dbReference type="Rhea" id="RHEA:23177"/>
    </physiologicalReaction>
</comment>
<comment type="catalytic activity">
    <reaction evidence="2">
        <text>propanoate + ATP + CoA = propanoyl-CoA + AMP + diphosphate</text>
        <dbReference type="Rhea" id="RHEA:20373"/>
        <dbReference type="ChEBI" id="CHEBI:17272"/>
        <dbReference type="ChEBI" id="CHEBI:30616"/>
        <dbReference type="ChEBI" id="CHEBI:33019"/>
        <dbReference type="ChEBI" id="CHEBI:57287"/>
        <dbReference type="ChEBI" id="CHEBI:57392"/>
        <dbReference type="ChEBI" id="CHEBI:456215"/>
        <dbReference type="EC" id="6.2.1.17"/>
    </reaction>
    <physiologicalReaction direction="left-to-right" evidence="2">
        <dbReference type="Rhea" id="RHEA:20374"/>
    </physiologicalReaction>
</comment>
<comment type="activity regulation">
    <text evidence="2">Inhibited by acetylation at Lys-661 and activated by deacetylation mediated by the deacetylases SIRT1 and SIRT3.</text>
</comment>
<comment type="subunit">
    <text evidence="2 4 6">Monomer (PubMed:10843999). Interacts with TFEB (PubMed:28552616). AMPK-mediated phosphorylated form at Ser-659 interacts with KPNA1; this interaction results in nuclear translocation of ACSS2 (PubMed:28552616). Interacts with the 'Thr-172' phosphorylated form of PRKAA2 (PubMed:28552616). Interacts with CREBBP (By similarity).</text>
</comment>
<comment type="subcellular location">
    <subcellularLocation>
        <location evidence="4 5 6">Cytoplasm</location>
        <location evidence="4 5 6">Cytosol</location>
    </subcellularLocation>
    <subcellularLocation>
        <location evidence="2">Cytoplasm</location>
    </subcellularLocation>
    <subcellularLocation>
        <location evidence="6">Nucleus</location>
    </subcellularLocation>
    <text evidence="2 6">Glucose deprivation results in its AMPK-dependent phosphorylation and subsequent nuclear translocation (PubMed:28552616). Phosphorylation at Ser-659, leads to exposure of its nuclear localization signal which is required for its interaction with KPNA1 and subsequent translocation to the nucleus (PubMed:28552616). Found in the cytoplasm in undifferentiated neurons and upon differentiation, translocates to nucleus (By similarity).</text>
</comment>
<comment type="alternative products">
    <event type="alternative splicing"/>
    <isoform>
        <id>Q9NR19-1</id>
        <name>1</name>
        <sequence type="displayed"/>
    </isoform>
    <isoform>
        <id>Q9NR19-2</id>
        <name>2</name>
        <sequence type="described" ref="VSP_046376"/>
    </isoform>
</comment>
<comment type="PTM">
    <text evidence="2">Reversibly acetylated at Lys-661 (By similarity). The acetyl-CoA synthase activity is inhibited by acetylation and activated by deacetylation mediated by the deacetylases SIRT1 and SIRT3 (By similarity).</text>
</comment>
<comment type="PTM">
    <text evidence="6">Glucose deprivation results in its AMPK-dependent phosphorylation at Ser-659, which leads to exposure of its nuclear localization signal, required for its interaction with KPNA1 and subsequent translocation to the nucleus.</text>
</comment>
<comment type="similarity">
    <text evidence="8">Belongs to the ATP-dependent AMP-binding enzyme family.</text>
</comment>
<name>ACSA_HUMAN</name>
<evidence type="ECO:0000250" key="1"/>
<evidence type="ECO:0000250" key="2">
    <source>
        <dbReference type="UniProtKB" id="Q9QXG4"/>
    </source>
</evidence>
<evidence type="ECO:0000256" key="3">
    <source>
        <dbReference type="SAM" id="MobiDB-lite"/>
    </source>
</evidence>
<evidence type="ECO:0000269" key="4">
    <source>
    </source>
</evidence>
<evidence type="ECO:0000269" key="5">
    <source>
    </source>
</evidence>
<evidence type="ECO:0000269" key="6">
    <source>
    </source>
</evidence>
<evidence type="ECO:0000303" key="7">
    <source>
    </source>
</evidence>
<evidence type="ECO:0000305" key="8"/>
<evidence type="ECO:0000305" key="9">
    <source>
    </source>
</evidence>
<evidence type="ECO:0000305" key="10">
    <source>
    </source>
</evidence>
<evidence type="ECO:0007744" key="11">
    <source>
    </source>
</evidence>
<evidence type="ECO:0007744" key="12">
    <source>
    </source>
</evidence>
<evidence type="ECO:0007744" key="13">
    <source>
    </source>
</evidence>
<evidence type="ECO:0007744" key="14">
    <source>
    </source>
</evidence>
<evidence type="ECO:0007744" key="15">
    <source>
    </source>
</evidence>
<accession>Q9NR19</accession>
<accession>A6NE90</accession>
<accession>Q5QPH2</accession>
<accession>Q5QPH3</accession>
<accession>Q8N238</accession>
<accession>Q96EL0</accession>
<accession>Q9NQP7</accession>
<accession>Q9UJ15</accession>
<protein>
    <recommendedName>
        <fullName>Acetyl-coenzyme A synthetase, cytoplasmic</fullName>
        <ecNumber evidence="4 5 6">6.2.1.1</ecNumber>
    </recommendedName>
    <alternativeName>
        <fullName>Acetate--CoA ligase</fullName>
    </alternativeName>
    <alternativeName>
        <fullName>Acetyl-CoA synthetase</fullName>
        <shortName>ACS</shortName>
        <shortName>AceCS</shortName>
    </alternativeName>
    <alternativeName>
        <fullName evidence="2">Acetyl-CoA synthetase 1</fullName>
        <shortName evidence="2">AceCS1</shortName>
    </alternativeName>
    <alternativeName>
        <fullName>Acyl-CoA synthetase short-chain family member 2</fullName>
    </alternativeName>
    <alternativeName>
        <fullName>Acyl-activating enzyme</fullName>
    </alternativeName>
    <alternativeName>
        <fullName>Propionate--CoA ligase</fullName>
        <ecNumber evidence="2">6.2.1.17</ecNumber>
    </alternativeName>
</protein>
<dbReference type="EC" id="6.2.1.1" evidence="4 5 6"/>
<dbReference type="EC" id="6.2.1.17" evidence="2"/>
<dbReference type="EMBL" id="AF263614">
    <property type="protein sequence ID" value="AAF75064.1"/>
    <property type="molecule type" value="mRNA"/>
</dbReference>
<dbReference type="EMBL" id="AK092281">
    <property type="protein sequence ID" value="BAC03849.1"/>
    <property type="molecule type" value="mRNA"/>
</dbReference>
<dbReference type="EMBL" id="AL133324">
    <property type="status" value="NOT_ANNOTATED_CDS"/>
    <property type="molecule type" value="Genomic_DNA"/>
</dbReference>
<dbReference type="EMBL" id="AL049709">
    <property type="status" value="NOT_ANNOTATED_CDS"/>
    <property type="molecule type" value="Genomic_DNA"/>
</dbReference>
<dbReference type="EMBL" id="CH471077">
    <property type="protein sequence ID" value="EAW76248.1"/>
    <property type="molecule type" value="Genomic_DNA"/>
</dbReference>
<dbReference type="EMBL" id="BC012172">
    <property type="protein sequence ID" value="AAH12172.1"/>
    <property type="molecule type" value="mRNA"/>
</dbReference>
<dbReference type="CCDS" id="CCDS13243.1">
    <molecule id="Q9NR19-1"/>
</dbReference>
<dbReference type="CCDS" id="CCDS42868.2">
    <molecule id="Q9NR19-2"/>
</dbReference>
<dbReference type="RefSeq" id="NP_001070020.2">
    <molecule id="Q9NR19-2"/>
    <property type="nucleotide sequence ID" value="NM_001076552.3"/>
</dbReference>
<dbReference type="RefSeq" id="NP_061147.1">
    <molecule id="Q9NR19-1"/>
    <property type="nucleotide sequence ID" value="NM_018677.4"/>
</dbReference>
<dbReference type="SMR" id="Q9NR19"/>
<dbReference type="BioGRID" id="120989">
    <property type="interactions" value="15"/>
</dbReference>
<dbReference type="FunCoup" id="Q9NR19">
    <property type="interactions" value="1564"/>
</dbReference>
<dbReference type="IntAct" id="Q9NR19">
    <property type="interactions" value="6"/>
</dbReference>
<dbReference type="STRING" id="9606.ENSP00000253382"/>
<dbReference type="BindingDB" id="Q9NR19"/>
<dbReference type="ChEMBL" id="CHEMBL4523467"/>
<dbReference type="DrugBank" id="DB00131">
    <property type="generic name" value="Adenosine phosphate"/>
</dbReference>
<dbReference type="DrugBank" id="DB00171">
    <property type="generic name" value="ATP"/>
</dbReference>
<dbReference type="DrugBank" id="DB09395">
    <property type="generic name" value="Sodium acetate"/>
</dbReference>
<dbReference type="GuidetoPHARMACOLOGY" id="3128"/>
<dbReference type="SwissLipids" id="SLP:000001167"/>
<dbReference type="GlyGen" id="Q9NR19">
    <property type="glycosylation" value="1 site, 1 O-linked glycan (1 site)"/>
</dbReference>
<dbReference type="iPTMnet" id="Q9NR19"/>
<dbReference type="PhosphoSitePlus" id="Q9NR19"/>
<dbReference type="SwissPalm" id="Q9NR19"/>
<dbReference type="BioMuta" id="ACSS2"/>
<dbReference type="DMDM" id="20137525"/>
<dbReference type="jPOST" id="Q9NR19"/>
<dbReference type="MassIVE" id="Q9NR19"/>
<dbReference type="PaxDb" id="9606-ENSP00000253382"/>
<dbReference type="PeptideAtlas" id="Q9NR19"/>
<dbReference type="ProteomicsDB" id="63659"/>
<dbReference type="ProteomicsDB" id="82253">
    <molecule id="Q9NR19-1"/>
</dbReference>
<dbReference type="Pumba" id="Q9NR19"/>
<dbReference type="Antibodypedia" id="1332">
    <property type="antibodies" value="459 antibodies from 34 providers"/>
</dbReference>
<dbReference type="DNASU" id="55902"/>
<dbReference type="Ensembl" id="ENST00000253382.5">
    <molecule id="Q9NR19-2"/>
    <property type="protein sequence ID" value="ENSP00000253382.5"/>
    <property type="gene ID" value="ENSG00000131069.20"/>
</dbReference>
<dbReference type="Ensembl" id="ENST00000360596.7">
    <molecule id="Q9NR19-1"/>
    <property type="protein sequence ID" value="ENSP00000353804.2"/>
    <property type="gene ID" value="ENSG00000131069.20"/>
</dbReference>
<dbReference type="GeneID" id="55902"/>
<dbReference type="KEGG" id="hsa:55902"/>
<dbReference type="MANE-Select" id="ENST00000360596.7">
    <property type="protein sequence ID" value="ENSP00000353804.2"/>
    <property type="RefSeq nucleotide sequence ID" value="NM_018677.4"/>
    <property type="RefSeq protein sequence ID" value="NP_061147.1"/>
</dbReference>
<dbReference type="UCSC" id="uc002xbd.3">
    <molecule id="Q9NR19-1"/>
    <property type="organism name" value="human"/>
</dbReference>
<dbReference type="AGR" id="HGNC:15814"/>
<dbReference type="CTD" id="55902"/>
<dbReference type="DisGeNET" id="55902"/>
<dbReference type="GeneCards" id="ACSS2"/>
<dbReference type="HGNC" id="HGNC:15814">
    <property type="gene designation" value="ACSS2"/>
</dbReference>
<dbReference type="HPA" id="ENSG00000131069">
    <property type="expression patterns" value="Tissue enhanced (skeletal)"/>
</dbReference>
<dbReference type="MalaCards" id="ACSS2"/>
<dbReference type="MIM" id="605832">
    <property type="type" value="gene"/>
</dbReference>
<dbReference type="neXtProt" id="NX_Q9NR19"/>
<dbReference type="OpenTargets" id="ENSG00000131069"/>
<dbReference type="PharmGKB" id="PA24429"/>
<dbReference type="VEuPathDB" id="HostDB:ENSG00000131069"/>
<dbReference type="eggNOG" id="KOG1175">
    <property type="taxonomic scope" value="Eukaryota"/>
</dbReference>
<dbReference type="GeneTree" id="ENSGT00940000156358"/>
<dbReference type="HOGENOM" id="CLU_000022_3_6_1"/>
<dbReference type="InParanoid" id="Q9NR19"/>
<dbReference type="OMA" id="INVSYNC"/>
<dbReference type="OrthoDB" id="1706066at2759"/>
<dbReference type="PAN-GO" id="Q9NR19">
    <property type="GO annotations" value="3 GO annotations based on evolutionary models"/>
</dbReference>
<dbReference type="PhylomeDB" id="Q9NR19"/>
<dbReference type="TreeFam" id="TF300417"/>
<dbReference type="BioCyc" id="MetaCyc:HS05484-MONOMER"/>
<dbReference type="BRENDA" id="6.2.1.1">
    <property type="organism ID" value="2681"/>
</dbReference>
<dbReference type="PathwayCommons" id="Q9NR19"/>
<dbReference type="Reactome" id="R-HSA-2151201">
    <property type="pathway name" value="Transcriptional activation of mitochondrial biogenesis"/>
</dbReference>
<dbReference type="Reactome" id="R-HSA-71384">
    <property type="pathway name" value="Ethanol oxidation"/>
</dbReference>
<dbReference type="SignaLink" id="Q9NR19"/>
<dbReference type="SIGNOR" id="Q9NR19"/>
<dbReference type="BioGRID-ORCS" id="55902">
    <property type="hits" value="8 hits in 1163 CRISPR screens"/>
</dbReference>
<dbReference type="ChiTaRS" id="ACSS2">
    <property type="organism name" value="human"/>
</dbReference>
<dbReference type="GeneWiki" id="ACSS2"/>
<dbReference type="GenomeRNAi" id="55902"/>
<dbReference type="Pharos" id="Q9NR19">
    <property type="development level" value="Tchem"/>
</dbReference>
<dbReference type="PRO" id="PR:Q9NR19"/>
<dbReference type="Proteomes" id="UP000005640">
    <property type="component" value="Chromosome 20"/>
</dbReference>
<dbReference type="RNAct" id="Q9NR19">
    <property type="molecule type" value="protein"/>
</dbReference>
<dbReference type="Bgee" id="ENSG00000131069">
    <property type="expression patterns" value="Expressed in ileal mucosa and 180 other cell types or tissues"/>
</dbReference>
<dbReference type="ExpressionAtlas" id="Q9NR19">
    <property type="expression patterns" value="baseline and differential"/>
</dbReference>
<dbReference type="GO" id="GO:0005737">
    <property type="term" value="C:cytoplasm"/>
    <property type="evidence" value="ECO:0000318"/>
    <property type="project" value="GO_Central"/>
</dbReference>
<dbReference type="GO" id="GO:0005829">
    <property type="term" value="C:cytosol"/>
    <property type="evidence" value="ECO:0000314"/>
    <property type="project" value="UniProtKB"/>
</dbReference>
<dbReference type="GO" id="GO:0005759">
    <property type="term" value="C:mitochondrial matrix"/>
    <property type="evidence" value="ECO:0000304"/>
    <property type="project" value="Reactome"/>
</dbReference>
<dbReference type="GO" id="GO:0005634">
    <property type="term" value="C:nucleus"/>
    <property type="evidence" value="ECO:0000314"/>
    <property type="project" value="UniProtKB"/>
</dbReference>
<dbReference type="GO" id="GO:0003987">
    <property type="term" value="F:acetate-CoA ligase activity"/>
    <property type="evidence" value="ECO:0000314"/>
    <property type="project" value="UniProtKB"/>
</dbReference>
<dbReference type="GO" id="GO:0016208">
    <property type="term" value="F:AMP binding"/>
    <property type="evidence" value="ECO:0000305"/>
    <property type="project" value="UniProtKB"/>
</dbReference>
<dbReference type="GO" id="GO:0005524">
    <property type="term" value="F:ATP binding"/>
    <property type="evidence" value="ECO:0007669"/>
    <property type="project" value="UniProtKB-KW"/>
</dbReference>
<dbReference type="GO" id="GO:0003682">
    <property type="term" value="F:chromatin binding"/>
    <property type="evidence" value="ECO:0000250"/>
    <property type="project" value="UniProtKB"/>
</dbReference>
<dbReference type="GO" id="GO:0050218">
    <property type="term" value="F:propionate-CoA ligase activity"/>
    <property type="evidence" value="ECO:0000250"/>
    <property type="project" value="UniProtKB"/>
</dbReference>
<dbReference type="GO" id="GO:0003713">
    <property type="term" value="F:transcription coactivator activity"/>
    <property type="evidence" value="ECO:0000250"/>
    <property type="project" value="UniProtKB"/>
</dbReference>
<dbReference type="GO" id="GO:0019413">
    <property type="term" value="P:acetate biosynthetic process"/>
    <property type="evidence" value="ECO:0007669"/>
    <property type="project" value="Ensembl"/>
</dbReference>
<dbReference type="GO" id="GO:0006085">
    <property type="term" value="P:acetyl-CoA biosynthetic process"/>
    <property type="evidence" value="ECO:0000318"/>
    <property type="project" value="GO_Central"/>
</dbReference>
<dbReference type="GO" id="GO:0019427">
    <property type="term" value="P:acetyl-CoA biosynthetic process from acetate"/>
    <property type="evidence" value="ECO:0007669"/>
    <property type="project" value="InterPro"/>
</dbReference>
<dbReference type="GO" id="GO:0006068">
    <property type="term" value="P:ethanol catabolic process"/>
    <property type="evidence" value="ECO:0000304"/>
    <property type="project" value="Reactome"/>
</dbReference>
<dbReference type="GO" id="GO:0008610">
    <property type="term" value="P:lipid biosynthetic process"/>
    <property type="evidence" value="ECO:0000315"/>
    <property type="project" value="UniProtKB"/>
</dbReference>
<dbReference type="GO" id="GO:0007616">
    <property type="term" value="P:long-term memory"/>
    <property type="evidence" value="ECO:0000250"/>
    <property type="project" value="UniProtKB"/>
</dbReference>
<dbReference type="GO" id="GO:0019542">
    <property type="term" value="P:propionate biosynthetic process"/>
    <property type="evidence" value="ECO:0007669"/>
    <property type="project" value="Ensembl"/>
</dbReference>
<dbReference type="CDD" id="cd05966">
    <property type="entry name" value="ACS"/>
    <property type="match status" value="1"/>
</dbReference>
<dbReference type="FunFam" id="3.30.300.30:FF:000004">
    <property type="entry name" value="Acetyl-coenzyme A synthetase"/>
    <property type="match status" value="1"/>
</dbReference>
<dbReference type="FunFam" id="3.40.50.12780:FF:000001">
    <property type="entry name" value="Acetyl-coenzyme A synthetase"/>
    <property type="match status" value="1"/>
</dbReference>
<dbReference type="Gene3D" id="3.30.300.30">
    <property type="match status" value="1"/>
</dbReference>
<dbReference type="Gene3D" id="3.40.50.12780">
    <property type="entry name" value="N-terminal domain of ligase-like"/>
    <property type="match status" value="1"/>
</dbReference>
<dbReference type="InterPro" id="IPR011904">
    <property type="entry name" value="Ac_CoA_lig"/>
</dbReference>
<dbReference type="InterPro" id="IPR032387">
    <property type="entry name" value="ACAS_N"/>
</dbReference>
<dbReference type="InterPro" id="IPR025110">
    <property type="entry name" value="AMP-bd_C"/>
</dbReference>
<dbReference type="InterPro" id="IPR045851">
    <property type="entry name" value="AMP-bd_C_sf"/>
</dbReference>
<dbReference type="InterPro" id="IPR020845">
    <property type="entry name" value="AMP-binding_CS"/>
</dbReference>
<dbReference type="InterPro" id="IPR000873">
    <property type="entry name" value="AMP-dep_synth/lig_dom"/>
</dbReference>
<dbReference type="InterPro" id="IPR042099">
    <property type="entry name" value="ANL_N_sf"/>
</dbReference>
<dbReference type="NCBIfam" id="TIGR02188">
    <property type="entry name" value="Ac_CoA_lig_AcsA"/>
    <property type="match status" value="1"/>
</dbReference>
<dbReference type="NCBIfam" id="NF001208">
    <property type="entry name" value="PRK00174.1"/>
    <property type="match status" value="1"/>
</dbReference>
<dbReference type="PANTHER" id="PTHR24095">
    <property type="entry name" value="ACETYL-COENZYME A SYNTHETASE"/>
    <property type="match status" value="1"/>
</dbReference>
<dbReference type="PANTHER" id="PTHR24095:SF126">
    <property type="entry name" value="ACETYL-COENZYME A SYNTHETASE, CYTOPLASMIC"/>
    <property type="match status" value="1"/>
</dbReference>
<dbReference type="Pfam" id="PF16177">
    <property type="entry name" value="ACAS_N"/>
    <property type="match status" value="1"/>
</dbReference>
<dbReference type="Pfam" id="PF00501">
    <property type="entry name" value="AMP-binding"/>
    <property type="match status" value="1"/>
</dbReference>
<dbReference type="Pfam" id="PF13193">
    <property type="entry name" value="AMP-binding_C"/>
    <property type="match status" value="1"/>
</dbReference>
<dbReference type="SUPFAM" id="SSF56801">
    <property type="entry name" value="Acetyl-CoA synthetase-like"/>
    <property type="match status" value="1"/>
</dbReference>
<dbReference type="PROSITE" id="PS00455">
    <property type="entry name" value="AMP_BINDING"/>
    <property type="match status" value="1"/>
</dbReference>